<reference key="1">
    <citation type="journal article" date="1990" name="Cell">
        <title>Cloning of the human and murine interleukin-7 receptors: demonstration of a soluble form and homology to a new receptor superfamily.</title>
        <authorList>
            <person name="Goodwin R.G."/>
            <person name="Friend D."/>
            <person name="Ziegler S.F."/>
            <person name="Jerzy R."/>
            <person name="Falk B.A."/>
            <person name="Gimpel S."/>
            <person name="Cosman D."/>
            <person name="Dower S.K."/>
            <person name="March C.J."/>
            <person name="Namen A.E."/>
            <person name="Park L.S."/>
        </authorList>
    </citation>
    <scope>NUCLEOTIDE SEQUENCE [MRNA]</scope>
</reference>
<reference key="2">
    <citation type="journal article" date="1999" name="Blood">
        <title>Restoration of lymphoid populations in a murine model of X-linked severe combined immunodeficiency by a gene-therapy approach.</title>
        <authorList>
            <person name="Lo M."/>
            <person name="Bloom M.L."/>
            <person name="Imada K."/>
            <person name="Berg M."/>
            <person name="Bollenbacher J.M."/>
            <person name="Bloom E.T."/>
            <person name="Kelsall B.L."/>
            <person name="Leonard W.J."/>
        </authorList>
    </citation>
    <scope>NUCLEOTIDE SEQUENCE [MRNA]</scope>
    <source>
        <strain>C57BL/6J</strain>
    </source>
</reference>
<reference key="3">
    <citation type="journal article" date="2005" name="Science">
        <title>The transcriptional landscape of the mammalian genome.</title>
        <authorList>
            <person name="Carninci P."/>
            <person name="Kasukawa T."/>
            <person name="Katayama S."/>
            <person name="Gough J."/>
            <person name="Frith M.C."/>
            <person name="Maeda N."/>
            <person name="Oyama R."/>
            <person name="Ravasi T."/>
            <person name="Lenhard B."/>
            <person name="Wells C."/>
            <person name="Kodzius R."/>
            <person name="Shimokawa K."/>
            <person name="Bajic V.B."/>
            <person name="Brenner S.E."/>
            <person name="Batalov S."/>
            <person name="Forrest A.R."/>
            <person name="Zavolan M."/>
            <person name="Davis M.J."/>
            <person name="Wilming L.G."/>
            <person name="Aidinis V."/>
            <person name="Allen J.E."/>
            <person name="Ambesi-Impiombato A."/>
            <person name="Apweiler R."/>
            <person name="Aturaliya R.N."/>
            <person name="Bailey T.L."/>
            <person name="Bansal M."/>
            <person name="Baxter L."/>
            <person name="Beisel K.W."/>
            <person name="Bersano T."/>
            <person name="Bono H."/>
            <person name="Chalk A.M."/>
            <person name="Chiu K.P."/>
            <person name="Choudhary V."/>
            <person name="Christoffels A."/>
            <person name="Clutterbuck D.R."/>
            <person name="Crowe M.L."/>
            <person name="Dalla E."/>
            <person name="Dalrymple B.P."/>
            <person name="de Bono B."/>
            <person name="Della Gatta G."/>
            <person name="di Bernardo D."/>
            <person name="Down T."/>
            <person name="Engstrom P."/>
            <person name="Fagiolini M."/>
            <person name="Faulkner G."/>
            <person name="Fletcher C.F."/>
            <person name="Fukushima T."/>
            <person name="Furuno M."/>
            <person name="Futaki S."/>
            <person name="Gariboldi M."/>
            <person name="Georgii-Hemming P."/>
            <person name="Gingeras T.R."/>
            <person name="Gojobori T."/>
            <person name="Green R.E."/>
            <person name="Gustincich S."/>
            <person name="Harbers M."/>
            <person name="Hayashi Y."/>
            <person name="Hensch T.K."/>
            <person name="Hirokawa N."/>
            <person name="Hill D."/>
            <person name="Huminiecki L."/>
            <person name="Iacono M."/>
            <person name="Ikeo K."/>
            <person name="Iwama A."/>
            <person name="Ishikawa T."/>
            <person name="Jakt M."/>
            <person name="Kanapin A."/>
            <person name="Katoh M."/>
            <person name="Kawasawa Y."/>
            <person name="Kelso J."/>
            <person name="Kitamura H."/>
            <person name="Kitano H."/>
            <person name="Kollias G."/>
            <person name="Krishnan S.P."/>
            <person name="Kruger A."/>
            <person name="Kummerfeld S.K."/>
            <person name="Kurochkin I.V."/>
            <person name="Lareau L.F."/>
            <person name="Lazarevic D."/>
            <person name="Lipovich L."/>
            <person name="Liu J."/>
            <person name="Liuni S."/>
            <person name="McWilliam S."/>
            <person name="Madan Babu M."/>
            <person name="Madera M."/>
            <person name="Marchionni L."/>
            <person name="Matsuda H."/>
            <person name="Matsuzawa S."/>
            <person name="Miki H."/>
            <person name="Mignone F."/>
            <person name="Miyake S."/>
            <person name="Morris K."/>
            <person name="Mottagui-Tabar S."/>
            <person name="Mulder N."/>
            <person name="Nakano N."/>
            <person name="Nakauchi H."/>
            <person name="Ng P."/>
            <person name="Nilsson R."/>
            <person name="Nishiguchi S."/>
            <person name="Nishikawa S."/>
            <person name="Nori F."/>
            <person name="Ohara O."/>
            <person name="Okazaki Y."/>
            <person name="Orlando V."/>
            <person name="Pang K.C."/>
            <person name="Pavan W.J."/>
            <person name="Pavesi G."/>
            <person name="Pesole G."/>
            <person name="Petrovsky N."/>
            <person name="Piazza S."/>
            <person name="Reed J."/>
            <person name="Reid J.F."/>
            <person name="Ring B.Z."/>
            <person name="Ringwald M."/>
            <person name="Rost B."/>
            <person name="Ruan Y."/>
            <person name="Salzberg S.L."/>
            <person name="Sandelin A."/>
            <person name="Schneider C."/>
            <person name="Schoenbach C."/>
            <person name="Sekiguchi K."/>
            <person name="Semple C.A."/>
            <person name="Seno S."/>
            <person name="Sessa L."/>
            <person name="Sheng Y."/>
            <person name="Shibata Y."/>
            <person name="Shimada H."/>
            <person name="Shimada K."/>
            <person name="Silva D."/>
            <person name="Sinclair B."/>
            <person name="Sperling S."/>
            <person name="Stupka E."/>
            <person name="Sugiura K."/>
            <person name="Sultana R."/>
            <person name="Takenaka Y."/>
            <person name="Taki K."/>
            <person name="Tammoja K."/>
            <person name="Tan S.L."/>
            <person name="Tang S."/>
            <person name="Taylor M.S."/>
            <person name="Tegner J."/>
            <person name="Teichmann S.A."/>
            <person name="Ueda H.R."/>
            <person name="van Nimwegen E."/>
            <person name="Verardo R."/>
            <person name="Wei C.L."/>
            <person name="Yagi K."/>
            <person name="Yamanishi H."/>
            <person name="Zabarovsky E."/>
            <person name="Zhu S."/>
            <person name="Zimmer A."/>
            <person name="Hide W."/>
            <person name="Bult C."/>
            <person name="Grimmond S.M."/>
            <person name="Teasdale R.D."/>
            <person name="Liu E.T."/>
            <person name="Brusic V."/>
            <person name="Quackenbush J."/>
            <person name="Wahlestedt C."/>
            <person name="Mattick J.S."/>
            <person name="Hume D.A."/>
            <person name="Kai C."/>
            <person name="Sasaki D."/>
            <person name="Tomaru Y."/>
            <person name="Fukuda S."/>
            <person name="Kanamori-Katayama M."/>
            <person name="Suzuki M."/>
            <person name="Aoki J."/>
            <person name="Arakawa T."/>
            <person name="Iida J."/>
            <person name="Imamura K."/>
            <person name="Itoh M."/>
            <person name="Kato T."/>
            <person name="Kawaji H."/>
            <person name="Kawagashira N."/>
            <person name="Kawashima T."/>
            <person name="Kojima M."/>
            <person name="Kondo S."/>
            <person name="Konno H."/>
            <person name="Nakano K."/>
            <person name="Ninomiya N."/>
            <person name="Nishio T."/>
            <person name="Okada M."/>
            <person name="Plessy C."/>
            <person name="Shibata K."/>
            <person name="Shiraki T."/>
            <person name="Suzuki S."/>
            <person name="Tagami M."/>
            <person name="Waki K."/>
            <person name="Watahiki A."/>
            <person name="Okamura-Oho Y."/>
            <person name="Suzuki H."/>
            <person name="Kawai J."/>
            <person name="Hayashizaki Y."/>
        </authorList>
    </citation>
    <scope>NUCLEOTIDE SEQUENCE [LARGE SCALE MRNA]</scope>
    <source>
        <strain>C57BL/6J</strain>
        <tissue>Thymus</tissue>
    </source>
</reference>
<reference key="4">
    <citation type="submission" date="2005-09" db="EMBL/GenBank/DDBJ databases">
        <authorList>
            <person name="Mural R.J."/>
            <person name="Adams M.D."/>
            <person name="Myers E.W."/>
            <person name="Smith H.O."/>
            <person name="Venter J.C."/>
        </authorList>
    </citation>
    <scope>NUCLEOTIDE SEQUENCE [LARGE SCALE GENOMIC DNA]</scope>
</reference>
<reference key="5">
    <citation type="journal article" date="1991" name="Mol. Cell. Biol.">
        <title>Organization of the murine and human interleukin-7 receptor genes: two mRNAs generated by differential splicing and presence of a type I-interferon-inducible promoter.</title>
        <authorList>
            <person name="Pleiman C.M."/>
            <person name="Gimpel S.D."/>
            <person name="Park L.S."/>
            <person name="Harada H."/>
            <person name="Taniguchi T."/>
            <person name="Ziegler S.F."/>
        </authorList>
    </citation>
    <scope>NUCLEOTIDE SEQUENCE [MRNA] OF 231-239 AND 264-272</scope>
</reference>
<reference key="6">
    <citation type="journal article" date="2009" name="Immunity">
        <title>The phagosomal proteome in interferon-gamma-activated macrophages.</title>
        <authorList>
            <person name="Trost M."/>
            <person name="English L."/>
            <person name="Lemieux S."/>
            <person name="Courcelles M."/>
            <person name="Desjardins M."/>
            <person name="Thibault P."/>
        </authorList>
    </citation>
    <scope>IDENTIFICATION BY MASS SPECTROMETRY [LARGE SCALE ANALYSIS]</scope>
</reference>
<reference key="7">
    <citation type="journal article" date="2014" name="Nat. Struct. Mol. Biol.">
        <title>Structural basis of the proinflammatory signaling complex mediated by TSLP.</title>
        <authorList>
            <person name="Verstraete K."/>
            <person name="van Schie L."/>
            <person name="Vyncke L."/>
            <person name="Bloch Y."/>
            <person name="Tavernier J."/>
            <person name="Pauwels E."/>
            <person name="Peelman F."/>
            <person name="Savvides S.N."/>
        </authorList>
    </citation>
    <scope>X-RAY CRYSTALLOGRAPHY (1.9 ANGSTROMS) OF 21-239 IN COMPLEX WITH CRLF2 AND TSLP</scope>
    <scope>DISULFIDE BONDS</scope>
</reference>
<protein>
    <recommendedName>
        <fullName>Interleukin-7 receptor subunit alpha</fullName>
        <shortName>IL-7 receptor subunit alpha</shortName>
        <shortName>IL-7R subunit alpha</shortName>
        <shortName>IL-7R-alpha</shortName>
        <shortName>IL-7RA</shortName>
    </recommendedName>
    <cdAntigenName>CD127</cdAntigenName>
</protein>
<name>IL7RA_MOUSE</name>
<accession>P16872</accession>
<accession>Q9R0C1</accession>
<organism>
    <name type="scientific">Mus musculus</name>
    <name type="common">Mouse</name>
    <dbReference type="NCBI Taxonomy" id="10090"/>
    <lineage>
        <taxon>Eukaryota</taxon>
        <taxon>Metazoa</taxon>
        <taxon>Chordata</taxon>
        <taxon>Craniata</taxon>
        <taxon>Vertebrata</taxon>
        <taxon>Euteleostomi</taxon>
        <taxon>Mammalia</taxon>
        <taxon>Eutheria</taxon>
        <taxon>Euarchontoglires</taxon>
        <taxon>Glires</taxon>
        <taxon>Rodentia</taxon>
        <taxon>Myomorpha</taxon>
        <taxon>Muroidea</taxon>
        <taxon>Muridae</taxon>
        <taxon>Murinae</taxon>
        <taxon>Mus</taxon>
        <taxon>Mus</taxon>
    </lineage>
</organism>
<gene>
    <name type="primary">Il7r</name>
</gene>
<evidence type="ECO:0000250" key="1"/>
<evidence type="ECO:0000250" key="2">
    <source>
        <dbReference type="UniProtKB" id="P16871"/>
    </source>
</evidence>
<evidence type="ECO:0000255" key="3"/>
<evidence type="ECO:0000255" key="4">
    <source>
        <dbReference type="PROSITE-ProRule" id="PRU00316"/>
    </source>
</evidence>
<evidence type="ECO:0000256" key="5">
    <source>
        <dbReference type="SAM" id="MobiDB-lite"/>
    </source>
</evidence>
<evidence type="ECO:0000269" key="6">
    <source>
    </source>
</evidence>
<evidence type="ECO:0000305" key="7"/>
<evidence type="ECO:0007829" key="8">
    <source>
        <dbReference type="PDB" id="4NN5"/>
    </source>
</evidence>
<evidence type="ECO:0007829" key="9">
    <source>
        <dbReference type="PDB" id="8DDC"/>
    </source>
</evidence>
<dbReference type="EMBL" id="M29697">
    <property type="protein sequence ID" value="AAA39304.1"/>
    <property type="molecule type" value="mRNA"/>
</dbReference>
<dbReference type="EMBL" id="AF078906">
    <property type="protein sequence ID" value="AAF06717.1"/>
    <property type="molecule type" value="mRNA"/>
</dbReference>
<dbReference type="EMBL" id="AK042264">
    <property type="protein sequence ID" value="BAC31208.1"/>
    <property type="molecule type" value="mRNA"/>
</dbReference>
<dbReference type="EMBL" id="CH466581">
    <property type="protein sequence ID" value="EDL03312.1"/>
    <property type="molecule type" value="Genomic_DNA"/>
</dbReference>
<dbReference type="CCDS" id="CCDS27376.1"/>
<dbReference type="PIR" id="D34791">
    <property type="entry name" value="D34791"/>
</dbReference>
<dbReference type="RefSeq" id="NP_032398.3">
    <property type="nucleotide sequence ID" value="NM_008372.4"/>
</dbReference>
<dbReference type="PDB" id="4NN5">
    <property type="method" value="X-ray"/>
    <property type="resolution" value="1.90 A"/>
    <property type="chains" value="B=21-239"/>
</dbReference>
<dbReference type="PDB" id="4NN6">
    <property type="method" value="X-ray"/>
    <property type="resolution" value="2.54 A"/>
    <property type="chains" value="B=21-239"/>
</dbReference>
<dbReference type="PDB" id="4NN7">
    <property type="method" value="X-ray"/>
    <property type="resolution" value="3.78 A"/>
    <property type="chains" value="B=21-239"/>
</dbReference>
<dbReference type="PDB" id="5J12">
    <property type="method" value="X-ray"/>
    <property type="resolution" value="3.55 A"/>
    <property type="chains" value="B=21-239"/>
</dbReference>
<dbReference type="PDB" id="8DDC">
    <property type="method" value="NMR"/>
    <property type="chains" value="B=236-266"/>
</dbReference>
<dbReference type="PDBsum" id="4NN5"/>
<dbReference type="PDBsum" id="4NN6"/>
<dbReference type="PDBsum" id="4NN7"/>
<dbReference type="PDBsum" id="5J12"/>
<dbReference type="PDBsum" id="8DDC"/>
<dbReference type="SMR" id="P16872"/>
<dbReference type="CORUM" id="P16872"/>
<dbReference type="DIP" id="DIP-59472N"/>
<dbReference type="FunCoup" id="P16872">
    <property type="interactions" value="1300"/>
</dbReference>
<dbReference type="IntAct" id="P16872">
    <property type="interactions" value="3"/>
</dbReference>
<dbReference type="STRING" id="10090.ENSMUSP00000003981"/>
<dbReference type="GlyCosmos" id="P16872">
    <property type="glycosylation" value="3 sites, No reported glycans"/>
</dbReference>
<dbReference type="GlyGen" id="P16872">
    <property type="glycosylation" value="4 sites"/>
</dbReference>
<dbReference type="iPTMnet" id="P16872"/>
<dbReference type="PhosphoSitePlus" id="P16872"/>
<dbReference type="PaxDb" id="10090-ENSMUSP00000003981"/>
<dbReference type="ProteomicsDB" id="266970"/>
<dbReference type="Antibodypedia" id="4129">
    <property type="antibodies" value="1480 antibodies from 49 providers"/>
</dbReference>
<dbReference type="DNASU" id="16197"/>
<dbReference type="Ensembl" id="ENSMUST00000003981.6">
    <property type="protein sequence ID" value="ENSMUSP00000003981.5"/>
    <property type="gene ID" value="ENSMUSG00000003882.6"/>
</dbReference>
<dbReference type="GeneID" id="16197"/>
<dbReference type="KEGG" id="mmu:16197"/>
<dbReference type="UCSC" id="uc007vfo.2">
    <property type="organism name" value="mouse"/>
</dbReference>
<dbReference type="AGR" id="MGI:96562"/>
<dbReference type="CTD" id="3575"/>
<dbReference type="MGI" id="MGI:96562">
    <property type="gene designation" value="Il7r"/>
</dbReference>
<dbReference type="VEuPathDB" id="HostDB:ENSMUSG00000003882"/>
<dbReference type="eggNOG" id="ENOG502S4WE">
    <property type="taxonomic scope" value="Eukaryota"/>
</dbReference>
<dbReference type="GeneTree" id="ENSGT00510000048500"/>
<dbReference type="HOGENOM" id="CLU_045398_0_0_1"/>
<dbReference type="InParanoid" id="P16872"/>
<dbReference type="OMA" id="QIHRVDD"/>
<dbReference type="OrthoDB" id="8611929at2759"/>
<dbReference type="PhylomeDB" id="P16872"/>
<dbReference type="TreeFam" id="TF336573"/>
<dbReference type="Reactome" id="R-MMU-1266695">
    <property type="pathway name" value="Interleukin-7 signaling"/>
</dbReference>
<dbReference type="Reactome" id="R-MMU-8856825">
    <property type="pathway name" value="Cargo recognition for clathrin-mediated endocytosis"/>
</dbReference>
<dbReference type="Reactome" id="R-MMU-8856828">
    <property type="pathway name" value="Clathrin-mediated endocytosis"/>
</dbReference>
<dbReference type="BioGRID-ORCS" id="16197">
    <property type="hits" value="1 hit in 79 CRISPR screens"/>
</dbReference>
<dbReference type="ChiTaRS" id="Il7r">
    <property type="organism name" value="mouse"/>
</dbReference>
<dbReference type="EvolutionaryTrace" id="P16872"/>
<dbReference type="PRO" id="PR:P16872"/>
<dbReference type="Proteomes" id="UP000000589">
    <property type="component" value="Chromosome 15"/>
</dbReference>
<dbReference type="RNAct" id="P16872">
    <property type="molecule type" value="protein"/>
</dbReference>
<dbReference type="Bgee" id="ENSMUSG00000003882">
    <property type="expression patterns" value="Expressed in peripheral lymph node and 78 other cell types or tissues"/>
</dbReference>
<dbReference type="ExpressionAtlas" id="P16872">
    <property type="expression patterns" value="baseline and differential"/>
</dbReference>
<dbReference type="GO" id="GO:0005829">
    <property type="term" value="C:cytosol"/>
    <property type="evidence" value="ECO:0007669"/>
    <property type="project" value="Ensembl"/>
</dbReference>
<dbReference type="GO" id="GO:0009897">
    <property type="term" value="C:external side of plasma membrane"/>
    <property type="evidence" value="ECO:0000314"/>
    <property type="project" value="MGI"/>
</dbReference>
<dbReference type="GO" id="GO:0005654">
    <property type="term" value="C:nucleoplasm"/>
    <property type="evidence" value="ECO:0007669"/>
    <property type="project" value="Ensembl"/>
</dbReference>
<dbReference type="GO" id="GO:0005886">
    <property type="term" value="C:plasma membrane"/>
    <property type="evidence" value="ECO:0000304"/>
    <property type="project" value="Reactome"/>
</dbReference>
<dbReference type="GO" id="GO:0004917">
    <property type="term" value="F:interleukin-7 receptor activity"/>
    <property type="evidence" value="ECO:0007669"/>
    <property type="project" value="Ensembl"/>
</dbReference>
<dbReference type="GO" id="GO:0001782">
    <property type="term" value="P:B cell homeostasis"/>
    <property type="evidence" value="ECO:0000316"/>
    <property type="project" value="MGI"/>
</dbReference>
<dbReference type="GO" id="GO:0042100">
    <property type="term" value="P:B cell proliferation"/>
    <property type="evidence" value="ECO:0000315"/>
    <property type="project" value="MGI"/>
</dbReference>
<dbReference type="GO" id="GO:0000902">
    <property type="term" value="P:cell morphogenesis"/>
    <property type="evidence" value="ECO:0000316"/>
    <property type="project" value="MGI"/>
</dbReference>
<dbReference type="GO" id="GO:0019725">
    <property type="term" value="P:cellular homeostasis"/>
    <property type="evidence" value="ECO:0007669"/>
    <property type="project" value="Ensembl"/>
</dbReference>
<dbReference type="GO" id="GO:0050830">
    <property type="term" value="P:defense response to Gram-positive bacterium"/>
    <property type="evidence" value="ECO:0000315"/>
    <property type="project" value="UniProtKB"/>
</dbReference>
<dbReference type="GO" id="GO:0010467">
    <property type="term" value="P:gene expression"/>
    <property type="evidence" value="ECO:0000315"/>
    <property type="project" value="MGI"/>
</dbReference>
<dbReference type="GO" id="GO:0048535">
    <property type="term" value="P:lymph node development"/>
    <property type="evidence" value="ECO:0000315"/>
    <property type="project" value="MGI"/>
</dbReference>
<dbReference type="GO" id="GO:0070233">
    <property type="term" value="P:negative regulation of T cell apoptotic process"/>
    <property type="evidence" value="ECO:0000315"/>
    <property type="project" value="MGI"/>
</dbReference>
<dbReference type="GO" id="GO:0001915">
    <property type="term" value="P:negative regulation of T cell mediated cytotoxicity"/>
    <property type="evidence" value="ECO:0000315"/>
    <property type="project" value="MGI"/>
</dbReference>
<dbReference type="GO" id="GO:0008284">
    <property type="term" value="P:positive regulation of cell population proliferation"/>
    <property type="evidence" value="ECO:0007669"/>
    <property type="project" value="Ensembl"/>
</dbReference>
<dbReference type="GO" id="GO:0010628">
    <property type="term" value="P:positive regulation of gene expression"/>
    <property type="evidence" value="ECO:0000315"/>
    <property type="project" value="MGI"/>
</dbReference>
<dbReference type="GO" id="GO:1904894">
    <property type="term" value="P:positive regulation of receptor signaling pathway via STAT"/>
    <property type="evidence" value="ECO:0007669"/>
    <property type="project" value="Ensembl"/>
</dbReference>
<dbReference type="GO" id="GO:0033089">
    <property type="term" value="P:positive regulation of T cell differentiation in thymus"/>
    <property type="evidence" value="ECO:0000315"/>
    <property type="project" value="MGI"/>
</dbReference>
<dbReference type="GO" id="GO:0008361">
    <property type="term" value="P:regulation of cell size"/>
    <property type="evidence" value="ECO:0000314"/>
    <property type="project" value="MGI"/>
</dbReference>
<dbReference type="GO" id="GO:0030217">
    <property type="term" value="P:T cell differentiation"/>
    <property type="evidence" value="ECO:0000315"/>
    <property type="project" value="MGI"/>
</dbReference>
<dbReference type="GO" id="GO:0033077">
    <property type="term" value="P:T cell differentiation in thymus"/>
    <property type="evidence" value="ECO:0000315"/>
    <property type="project" value="MGI"/>
</dbReference>
<dbReference type="GO" id="GO:0043029">
    <property type="term" value="P:T cell homeostasis"/>
    <property type="evidence" value="ECO:0000315"/>
    <property type="project" value="MGI"/>
</dbReference>
<dbReference type="GO" id="GO:0001913">
    <property type="term" value="P:T cell mediated cytotoxicity"/>
    <property type="evidence" value="ECO:0000315"/>
    <property type="project" value="MGI"/>
</dbReference>
<dbReference type="CDD" id="cd00063">
    <property type="entry name" value="FN3"/>
    <property type="match status" value="1"/>
</dbReference>
<dbReference type="Gene3D" id="2.60.40.1870">
    <property type="match status" value="1"/>
</dbReference>
<dbReference type="Gene3D" id="2.60.40.10">
    <property type="entry name" value="Immunoglobulins"/>
    <property type="match status" value="1"/>
</dbReference>
<dbReference type="InterPro" id="IPR040997">
    <property type="entry name" value="FN3_7"/>
</dbReference>
<dbReference type="InterPro" id="IPR003961">
    <property type="entry name" value="FN3_dom"/>
</dbReference>
<dbReference type="InterPro" id="IPR036116">
    <property type="entry name" value="FN3_sf"/>
</dbReference>
<dbReference type="InterPro" id="IPR003531">
    <property type="entry name" value="Hempt_rcpt_S_F1_CS"/>
</dbReference>
<dbReference type="InterPro" id="IPR013783">
    <property type="entry name" value="Ig-like_fold"/>
</dbReference>
<dbReference type="PANTHER" id="PTHR23037">
    <property type="entry name" value="CYTOKINE RECEPTOR"/>
    <property type="match status" value="1"/>
</dbReference>
<dbReference type="PANTHER" id="PTHR23037:SF27">
    <property type="entry name" value="INTERLEUKIN-7 RECEPTOR SUBUNIT ALPHA"/>
    <property type="match status" value="1"/>
</dbReference>
<dbReference type="Pfam" id="PF18447">
    <property type="entry name" value="FN3_7"/>
    <property type="match status" value="1"/>
</dbReference>
<dbReference type="SUPFAM" id="SSF49265">
    <property type="entry name" value="Fibronectin type III"/>
    <property type="match status" value="1"/>
</dbReference>
<dbReference type="PROSITE" id="PS50853">
    <property type="entry name" value="FN3"/>
    <property type="match status" value="1"/>
</dbReference>
<dbReference type="PROSITE" id="PS01355">
    <property type="entry name" value="HEMATOPO_REC_S_F1"/>
    <property type="match status" value="1"/>
</dbReference>
<sequence length="459" mass="51605">MMALGRAFAIVFCLIQAVSGESGNAQDGDLEDADADDHSFWCHSQLEVDGSQHLLTCAFNDSDINTANLEFQICGALLRVKCLTLNKLQDIYFIKTSEFLLIGSSNICVKLGQKNLTCKNMAINTIVKAEAPSDLKVVYRKEANDFLVTFNAPHLKKKYLKKVKHDVAYRPARGESNWTHVSLFHTRTTIPQRKLRPKAMYEIKVRSIPHNDYFKGFWSEWSPSSTFETPEPKNQGGWDPVLPSVTILSLFSVFLLVILAHVLWKKRIKPVVWPSLPDHKKTLEQLCKKPKTSLNVSFNPESFLDCQIHEVKGVEARDEVESFLPNDLPAQPEELETQGHRAAVHSANRSPETSVSPPETVRRESPLRCLARNLSTCNAPPLLSSRSPDYRDGDRNRPPVYQDLLPNSGNTNVPVPVPQPLPFQSGILIPVSQRQPISTSSVLNQEEAYVTMSSFYQNK</sequence>
<comment type="function">
    <text>Receptor for interleukin-7. Also acts as a receptor for thymic stromal lymphopoietin (TSLP).</text>
</comment>
<comment type="subunit">
    <text evidence="2 6">The IL7 receptor is a heterodimer of IL7R and IL2RG. The TSLP receptor is a heterodimer of CRLF2 and IL7R. Interacts with CD53 (By similarity).</text>
</comment>
<comment type="subcellular location">
    <subcellularLocation>
        <location>Membrane</location>
        <topology>Single-pass type I membrane protein</topology>
    </subcellularLocation>
</comment>
<comment type="tissue specificity">
    <text>Spleen, thymus and fetal liver.</text>
</comment>
<comment type="domain">
    <text>The WSXWS motif appears to be necessary for proper protein folding and thereby efficient intracellular transport and cell-surface receptor binding.</text>
</comment>
<comment type="domain">
    <text>The box 1 motif is required for JAK interaction and/or activation.</text>
</comment>
<comment type="PTM">
    <text evidence="1">N-glycosylated IL-7Ralpha binds IL7 300-fold more tightly than the unglycosylated form.</text>
</comment>
<comment type="PTM">
    <text evidence="2">Ubiquitinated by MARCHF8; leading to lysosomal degradation.</text>
</comment>
<comment type="similarity">
    <text evidence="7">Belongs to the type I cytokine receptor family. Type 4 subfamily.</text>
</comment>
<proteinExistence type="evidence at protein level"/>
<keyword id="KW-0002">3D-structure</keyword>
<keyword id="KW-1015">Disulfide bond</keyword>
<keyword id="KW-0325">Glycoprotein</keyword>
<keyword id="KW-0472">Membrane</keyword>
<keyword id="KW-0597">Phosphoprotein</keyword>
<keyword id="KW-0675">Receptor</keyword>
<keyword id="KW-1185">Reference proteome</keyword>
<keyword id="KW-0732">Signal</keyword>
<keyword id="KW-0812">Transmembrane</keyword>
<keyword id="KW-1133">Transmembrane helix</keyword>
<keyword id="KW-0832">Ubl conjugation</keyword>
<feature type="signal peptide">
    <location>
        <begin position="1"/>
        <end position="20"/>
    </location>
</feature>
<feature type="chain" id="PRO_0000010910" description="Interleukin-7 receptor subunit alpha">
    <location>
        <begin position="21"/>
        <end position="459"/>
    </location>
</feature>
<feature type="topological domain" description="Extracellular" evidence="3">
    <location>
        <begin position="21"/>
        <end position="239"/>
    </location>
</feature>
<feature type="transmembrane region" description="Helical" evidence="3">
    <location>
        <begin position="240"/>
        <end position="264"/>
    </location>
</feature>
<feature type="topological domain" description="Cytoplasmic" evidence="3">
    <location>
        <begin position="265"/>
        <end position="459"/>
    </location>
</feature>
<feature type="domain" description="Fibronectin type-III" evidence="4">
    <location>
        <begin position="131"/>
        <end position="232"/>
    </location>
</feature>
<feature type="region of interest" description="Disordered" evidence="5">
    <location>
        <begin position="337"/>
        <end position="365"/>
    </location>
</feature>
<feature type="region of interest" description="Disordered" evidence="5">
    <location>
        <begin position="378"/>
        <end position="413"/>
    </location>
</feature>
<feature type="short sequence motif" description="WSXWS motif">
    <location>
        <begin position="218"/>
        <end position="222"/>
    </location>
</feature>
<feature type="short sequence motif" description="Box 1 motif">
    <location>
        <begin position="272"/>
        <end position="280"/>
    </location>
</feature>
<feature type="compositionally biased region" description="Polar residues" evidence="5">
    <location>
        <begin position="347"/>
        <end position="357"/>
    </location>
</feature>
<feature type="compositionally biased region" description="Basic and acidic residues" evidence="5">
    <location>
        <begin position="388"/>
        <end position="397"/>
    </location>
</feature>
<feature type="modified residue" description="Phosphothreonine; by PKC" evidence="3">
    <location>
        <position position="282"/>
    </location>
</feature>
<feature type="glycosylation site" description="N-linked (GlcNAc...) asparagine" evidence="3">
    <location>
        <position position="60"/>
    </location>
</feature>
<feature type="glycosylation site" description="N-linked (GlcNAc...) asparagine" evidence="3">
    <location>
        <position position="115"/>
    </location>
</feature>
<feature type="glycosylation site" description="N-linked (GlcNAc...) asparagine" evidence="3">
    <location>
        <position position="177"/>
    </location>
</feature>
<feature type="disulfide bond" evidence="6">
    <location>
        <begin position="42"/>
        <end position="57"/>
    </location>
</feature>
<feature type="disulfide bond" evidence="6">
    <location>
        <begin position="74"/>
        <end position="82"/>
    </location>
</feature>
<feature type="disulfide bond" evidence="6">
    <location>
        <begin position="108"/>
        <end position="118"/>
    </location>
</feature>
<feature type="sequence conflict" description="In Ref. 1; AAA39304." evidence="7" ref="1">
    <original>NPES</original>
    <variation>IPEI</variation>
    <location>
        <begin position="299"/>
        <end position="302"/>
    </location>
</feature>
<feature type="sequence conflict" description="In Ref. 1; AAA39304." evidence="7" ref="1">
    <original>S</original>
    <variation>I</variation>
    <location>
        <position position="322"/>
    </location>
</feature>
<feature type="sequence conflict" description="In Ref. 1; AAA39304." evidence="7" ref="1">
    <original>V</original>
    <variation>F</variation>
    <location>
        <position position="431"/>
    </location>
</feature>
<feature type="strand" evidence="8">
    <location>
        <begin position="40"/>
        <end position="51"/>
    </location>
</feature>
<feature type="strand" evidence="8">
    <location>
        <begin position="53"/>
        <end position="60"/>
    </location>
</feature>
<feature type="strand" evidence="8">
    <location>
        <begin position="69"/>
        <end position="79"/>
    </location>
</feature>
<feature type="strand" evidence="8">
    <location>
        <begin position="81"/>
        <end position="84"/>
    </location>
</feature>
<feature type="strand" evidence="8">
    <location>
        <begin position="86"/>
        <end position="88"/>
    </location>
</feature>
<feature type="strand" evidence="8">
    <location>
        <begin position="91"/>
        <end position="97"/>
    </location>
</feature>
<feature type="strand" evidence="8">
    <location>
        <begin position="101"/>
        <end position="103"/>
    </location>
</feature>
<feature type="strand" evidence="8">
    <location>
        <begin position="105"/>
        <end position="111"/>
    </location>
</feature>
<feature type="strand" evidence="8">
    <location>
        <begin position="114"/>
        <end position="121"/>
    </location>
</feature>
<feature type="helix" evidence="8">
    <location>
        <begin position="123"/>
        <end position="125"/>
    </location>
</feature>
<feature type="strand" evidence="8">
    <location>
        <begin position="126"/>
        <end position="128"/>
    </location>
</feature>
<feature type="strand" evidence="8">
    <location>
        <begin position="133"/>
        <end position="140"/>
    </location>
</feature>
<feature type="turn" evidence="8">
    <location>
        <begin position="141"/>
        <end position="144"/>
    </location>
</feature>
<feature type="strand" evidence="8">
    <location>
        <begin position="145"/>
        <end position="151"/>
    </location>
</feature>
<feature type="helix" evidence="8">
    <location>
        <begin position="153"/>
        <end position="156"/>
    </location>
</feature>
<feature type="strand" evidence="8">
    <location>
        <begin position="157"/>
        <end position="159"/>
    </location>
</feature>
<feature type="strand" evidence="8">
    <location>
        <begin position="163"/>
        <end position="174"/>
    </location>
</feature>
<feature type="strand" evidence="8">
    <location>
        <begin position="179"/>
        <end position="191"/>
    </location>
</feature>
<feature type="helix" evidence="8">
    <location>
        <begin position="192"/>
        <end position="194"/>
    </location>
</feature>
<feature type="strand" evidence="8">
    <location>
        <begin position="200"/>
        <end position="209"/>
    </location>
</feature>
<feature type="strand" evidence="8">
    <location>
        <begin position="225"/>
        <end position="228"/>
    </location>
</feature>
<feature type="helix" evidence="9">
    <location>
        <begin position="244"/>
        <end position="265"/>
    </location>
</feature>